<reference key="1">
    <citation type="journal article" date="2004" name="Nucleic Acids Res.">
        <title>The genome sequence of Bacillus cereus ATCC 10987 reveals metabolic adaptations and a large plasmid related to Bacillus anthracis pXO1.</title>
        <authorList>
            <person name="Rasko D.A."/>
            <person name="Ravel J."/>
            <person name="Oekstad O.A."/>
            <person name="Helgason E."/>
            <person name="Cer R.Z."/>
            <person name="Jiang L."/>
            <person name="Shores K.A."/>
            <person name="Fouts D.E."/>
            <person name="Tourasse N.J."/>
            <person name="Angiuoli S.V."/>
            <person name="Kolonay J.F."/>
            <person name="Nelson W.C."/>
            <person name="Kolstoe A.-B."/>
            <person name="Fraser C.M."/>
            <person name="Read T.D."/>
        </authorList>
    </citation>
    <scope>NUCLEOTIDE SEQUENCE [LARGE SCALE GENOMIC DNA]</scope>
    <source>
        <strain>ATCC 10987 / NRS 248</strain>
    </source>
</reference>
<accession>Q73BH8</accession>
<sequence>MTENHYLLLTPGPLTTTKTVKEVMLYDWCTWDVEYNTMVQDVRAKLVSLATKEEEKYTTVLMQGSGTFSVEAVIGSVIPKNGKLLVCTNGAYGKRIVQMAEMLHIDVVVSQTEEWEPTNVVEVEKILQQDKEITHIAIVHCETTTGIINPIVDVCKLGKQYGKVTLVDAMSSFGGIEIDIAELQIDFLISSANKCIQGVPGFGFVIAKRDELLKCKGQARSLSLDLYDQWETMENQNGKWRFTSPTHVVHAFYQALLELEKEGGVKARYNRYDNNQKLLVNRMREIGFKPLVDEKYQSPIITSFIYPEEWFDFEQLYNELKRDGFVIYPGKISKVDTFRIGNIGDVHEADINRLVDSIAKGVVIG</sequence>
<name>PHNW_BACC1</name>
<evidence type="ECO:0000255" key="1">
    <source>
        <dbReference type="HAMAP-Rule" id="MF_01376"/>
    </source>
</evidence>
<keyword id="KW-0032">Aminotransferase</keyword>
<keyword id="KW-0663">Pyridoxal phosphate</keyword>
<keyword id="KW-0670">Pyruvate</keyword>
<keyword id="KW-0808">Transferase</keyword>
<proteinExistence type="inferred from homology"/>
<gene>
    <name evidence="1" type="primary">phnW</name>
    <name type="ordered locus">BCE_1440</name>
</gene>
<dbReference type="EC" id="2.6.1.37" evidence="1"/>
<dbReference type="EMBL" id="AE017194">
    <property type="protein sequence ID" value="AAS40369.1"/>
    <property type="molecule type" value="Genomic_DNA"/>
</dbReference>
<dbReference type="SMR" id="Q73BH8"/>
<dbReference type="KEGG" id="bca:BCE_1440"/>
<dbReference type="HOGENOM" id="CLU_027686_3_1_9"/>
<dbReference type="Proteomes" id="UP000002527">
    <property type="component" value="Chromosome"/>
</dbReference>
<dbReference type="GO" id="GO:0047304">
    <property type="term" value="F:2-aminoethylphosphonate-pyruvate transaminase activity"/>
    <property type="evidence" value="ECO:0007669"/>
    <property type="project" value="UniProtKB-UniRule"/>
</dbReference>
<dbReference type="GO" id="GO:0019700">
    <property type="term" value="P:organic phosphonate catabolic process"/>
    <property type="evidence" value="ECO:0007669"/>
    <property type="project" value="InterPro"/>
</dbReference>
<dbReference type="Gene3D" id="3.90.1150.10">
    <property type="entry name" value="Aspartate Aminotransferase, domain 1"/>
    <property type="match status" value="1"/>
</dbReference>
<dbReference type="Gene3D" id="3.40.640.10">
    <property type="entry name" value="Type I PLP-dependent aspartate aminotransferase-like (Major domain)"/>
    <property type="match status" value="1"/>
</dbReference>
<dbReference type="HAMAP" id="MF_01376">
    <property type="entry name" value="PhnW_aminotrans_5"/>
    <property type="match status" value="1"/>
</dbReference>
<dbReference type="InterPro" id="IPR000192">
    <property type="entry name" value="Aminotrans_V_dom"/>
</dbReference>
<dbReference type="InterPro" id="IPR012703">
    <property type="entry name" value="NH2EtPonate_pyrv_transaminase"/>
</dbReference>
<dbReference type="InterPro" id="IPR015424">
    <property type="entry name" value="PyrdxlP-dep_Trfase"/>
</dbReference>
<dbReference type="InterPro" id="IPR015421">
    <property type="entry name" value="PyrdxlP-dep_Trfase_major"/>
</dbReference>
<dbReference type="InterPro" id="IPR015422">
    <property type="entry name" value="PyrdxlP-dep_Trfase_small"/>
</dbReference>
<dbReference type="InterPro" id="IPR024169">
    <property type="entry name" value="SP_NH2Trfase/AEP_transaminase"/>
</dbReference>
<dbReference type="NCBIfam" id="TIGR03301">
    <property type="entry name" value="PhnW-AepZ"/>
    <property type="match status" value="1"/>
</dbReference>
<dbReference type="NCBIfam" id="NF010006">
    <property type="entry name" value="PRK13479.1"/>
    <property type="match status" value="1"/>
</dbReference>
<dbReference type="NCBIfam" id="TIGR02326">
    <property type="entry name" value="transamin_PhnW"/>
    <property type="match status" value="1"/>
</dbReference>
<dbReference type="PANTHER" id="PTHR42778">
    <property type="entry name" value="2-AMINOETHYLPHOSPHONATE--PYRUVATE TRANSAMINASE"/>
    <property type="match status" value="1"/>
</dbReference>
<dbReference type="PANTHER" id="PTHR42778:SF1">
    <property type="entry name" value="2-AMINOETHYLPHOSPHONATE--PYRUVATE TRANSAMINASE"/>
    <property type="match status" value="1"/>
</dbReference>
<dbReference type="Pfam" id="PF00266">
    <property type="entry name" value="Aminotran_5"/>
    <property type="match status" value="1"/>
</dbReference>
<dbReference type="PIRSF" id="PIRSF000524">
    <property type="entry name" value="SPT"/>
    <property type="match status" value="1"/>
</dbReference>
<dbReference type="SUPFAM" id="SSF53383">
    <property type="entry name" value="PLP-dependent transferases"/>
    <property type="match status" value="1"/>
</dbReference>
<protein>
    <recommendedName>
        <fullName evidence="1">2-aminoethylphosphonate--pyruvate transaminase</fullName>
        <ecNumber evidence="1">2.6.1.37</ecNumber>
    </recommendedName>
    <alternativeName>
        <fullName evidence="1">2-aminoethylphosphonate aminotransferase</fullName>
    </alternativeName>
    <alternativeName>
        <fullName evidence="1">AEP transaminase</fullName>
        <shortName evidence="1">AEPT</shortName>
    </alternativeName>
</protein>
<organism>
    <name type="scientific">Bacillus cereus (strain ATCC 10987 / NRS 248)</name>
    <dbReference type="NCBI Taxonomy" id="222523"/>
    <lineage>
        <taxon>Bacteria</taxon>
        <taxon>Bacillati</taxon>
        <taxon>Bacillota</taxon>
        <taxon>Bacilli</taxon>
        <taxon>Bacillales</taxon>
        <taxon>Bacillaceae</taxon>
        <taxon>Bacillus</taxon>
        <taxon>Bacillus cereus group</taxon>
    </lineage>
</organism>
<comment type="function">
    <text evidence="1">Involved in phosphonate degradation.</text>
</comment>
<comment type="catalytic activity">
    <reaction evidence="1">
        <text>(2-aminoethyl)phosphonate + pyruvate = phosphonoacetaldehyde + L-alanine</text>
        <dbReference type="Rhea" id="RHEA:17021"/>
        <dbReference type="ChEBI" id="CHEBI:15361"/>
        <dbReference type="ChEBI" id="CHEBI:57418"/>
        <dbReference type="ChEBI" id="CHEBI:57972"/>
        <dbReference type="ChEBI" id="CHEBI:58383"/>
        <dbReference type="EC" id="2.6.1.37"/>
    </reaction>
</comment>
<comment type="cofactor">
    <cofactor evidence="1">
        <name>pyridoxal 5'-phosphate</name>
        <dbReference type="ChEBI" id="CHEBI:597326"/>
    </cofactor>
</comment>
<comment type="subunit">
    <text evidence="1">Homodimer.</text>
</comment>
<comment type="similarity">
    <text evidence="1">Belongs to the class-V pyridoxal-phosphate-dependent aminotransferase family. PhnW subfamily.</text>
</comment>
<feature type="chain" id="PRO_0000286754" description="2-aminoethylphosphonate--pyruvate transaminase">
    <location>
        <begin position="1"/>
        <end position="365"/>
    </location>
</feature>
<feature type="modified residue" description="N6-(pyridoxal phosphate)lysine" evidence="1">
    <location>
        <position position="194"/>
    </location>
</feature>